<reference key="1">
    <citation type="journal article" date="1991" name="Proc. Natl. Acad. Sci. U.S.A.">
        <title>A close relative of the nuclear, chromosomal high-mobility group protein HMG1 in yeast mitochondria.</title>
        <authorList>
            <person name="Diffley J.F.X."/>
            <person name="Stillman B."/>
        </authorList>
    </citation>
    <scope>NUCLEOTIDE SEQUENCE [GENOMIC DNA]</scope>
    <scope>PROTEIN SEQUENCE OF 27-56</scope>
</reference>
<reference key="2">
    <citation type="submission" date="1998-01" db="EMBL/GenBank/DDBJ databases">
        <title>Molecular cloning and characterization of yeast CDRP1: an HMG protein which recognizes cisplatin-damaged DNA and confers drug sensitivity.</title>
        <authorList>
            <person name="Sun C.L."/>
            <person name="Lee F.J."/>
            <person name="Lin-Chao S."/>
            <person name="Chao C.K."/>
        </authorList>
    </citation>
    <scope>NUCLEOTIDE SEQUENCE [MRNA]</scope>
</reference>
<reference key="3">
    <citation type="journal article" date="1997" name="Nature">
        <title>The nucleotide sequence of Saccharomyces cerevisiae chromosome XIII.</title>
        <authorList>
            <person name="Bowman S."/>
            <person name="Churcher C.M."/>
            <person name="Badcock K."/>
            <person name="Brown D."/>
            <person name="Chillingworth T."/>
            <person name="Connor R."/>
            <person name="Dedman K."/>
            <person name="Devlin K."/>
            <person name="Gentles S."/>
            <person name="Hamlin N."/>
            <person name="Hunt S."/>
            <person name="Jagels K."/>
            <person name="Lye G."/>
            <person name="Moule S."/>
            <person name="Odell C."/>
            <person name="Pearson D."/>
            <person name="Rajandream M.A."/>
            <person name="Rice P."/>
            <person name="Skelton J."/>
            <person name="Walsh S.V."/>
            <person name="Whitehead S."/>
            <person name="Barrell B.G."/>
        </authorList>
    </citation>
    <scope>NUCLEOTIDE SEQUENCE [LARGE SCALE GENOMIC DNA]</scope>
    <source>
        <strain>ATCC 204508 / S288c</strain>
    </source>
</reference>
<reference key="4">
    <citation type="journal article" date="2014" name="G3 (Bethesda)">
        <title>The reference genome sequence of Saccharomyces cerevisiae: Then and now.</title>
        <authorList>
            <person name="Engel S.R."/>
            <person name="Dietrich F.S."/>
            <person name="Fisk D.G."/>
            <person name="Binkley G."/>
            <person name="Balakrishnan R."/>
            <person name="Costanzo M.C."/>
            <person name="Dwight S.S."/>
            <person name="Hitz B.C."/>
            <person name="Karra K."/>
            <person name="Nash R.S."/>
            <person name="Weng S."/>
            <person name="Wong E.D."/>
            <person name="Lloyd P."/>
            <person name="Skrzypek M.S."/>
            <person name="Miyasato S.R."/>
            <person name="Simison M."/>
            <person name="Cherry J.M."/>
        </authorList>
    </citation>
    <scope>GENOME REANNOTATION</scope>
    <source>
        <strain>ATCC 204508 / S288c</strain>
    </source>
</reference>
<reference key="5">
    <citation type="journal article" date="2007" name="Genome Res.">
        <title>Approaching a complete repository of sequence-verified protein-encoding clones for Saccharomyces cerevisiae.</title>
        <authorList>
            <person name="Hu Y."/>
            <person name="Rolfs A."/>
            <person name="Bhullar B."/>
            <person name="Murthy T.V.S."/>
            <person name="Zhu C."/>
            <person name="Berger M.F."/>
            <person name="Camargo A.A."/>
            <person name="Kelley F."/>
            <person name="McCarron S."/>
            <person name="Jepson D."/>
            <person name="Richardson A."/>
            <person name="Raphael J."/>
            <person name="Moreira D."/>
            <person name="Taycher E."/>
            <person name="Zuo D."/>
            <person name="Mohr S."/>
            <person name="Kane M.F."/>
            <person name="Williamson J."/>
            <person name="Simpson A.J.G."/>
            <person name="Bulyk M.L."/>
            <person name="Harlow E."/>
            <person name="Marsischky G."/>
            <person name="Kolodner R.D."/>
            <person name="LaBaer J."/>
        </authorList>
    </citation>
    <scope>NUCLEOTIDE SEQUENCE [GENOMIC DNA]</scope>
    <source>
        <strain>ATCC 204508 / S288c</strain>
    </source>
</reference>
<reference key="6">
    <citation type="journal article" date="1998" name="Mol. Cell. Biol.">
        <title>A novel DNA-binding protein bound to the mitochondrial inner membrane restores the null mutation of mitochondrial histone Abf2p in Saccharomyces cerevisiae.</title>
        <authorList>
            <person name="Cho J.H."/>
            <person name="Ha S.J."/>
            <person name="Kao L.R."/>
            <person name="Megraw T.L."/>
            <person name="Chae C.-B."/>
        </authorList>
    </citation>
    <scope>DISRUPTION PHENOTYPE</scope>
</reference>
<reference key="7">
    <citation type="journal article" date="2003" name="Nature">
        <title>Global analysis of protein expression in yeast.</title>
        <authorList>
            <person name="Ghaemmaghami S."/>
            <person name="Huh W.-K."/>
            <person name="Bower K."/>
            <person name="Howson R.W."/>
            <person name="Belle A."/>
            <person name="Dephoure N."/>
            <person name="O'Shea E.K."/>
            <person name="Weissman J.S."/>
        </authorList>
    </citation>
    <scope>LEVEL OF PROTEIN EXPRESSION [LARGE SCALE ANALYSIS]</scope>
</reference>
<reference key="8">
    <citation type="journal article" date="2012" name="Proc. Natl. Acad. Sci. U.S.A.">
        <title>N-terminal acetylome analyses and functional insights of the N-terminal acetyltransferase NatB.</title>
        <authorList>
            <person name="Van Damme P."/>
            <person name="Lasa M."/>
            <person name="Polevoda B."/>
            <person name="Gazquez C."/>
            <person name="Elosegui-Artola A."/>
            <person name="Kim D.S."/>
            <person name="De Juan-Pardo E."/>
            <person name="Demeyer K."/>
            <person name="Hole K."/>
            <person name="Larrea E."/>
            <person name="Timmerman E."/>
            <person name="Prieto J."/>
            <person name="Arnesen T."/>
            <person name="Sherman F."/>
            <person name="Gevaert K."/>
            <person name="Aldabe R."/>
        </authorList>
    </citation>
    <scope>IDENTIFICATION BY MASS SPECTROMETRY [LARGE SCALE ANALYSIS]</scope>
</reference>
<feature type="transit peptide" description="Mitochondrion" evidence="3">
    <location>
        <begin position="1"/>
        <end position="26"/>
    </location>
</feature>
<feature type="chain" id="PRO_0000013477" description="ARS-binding factor 2, mitochondrial">
    <location>
        <begin position="27"/>
        <end position="183"/>
    </location>
</feature>
<feature type="DNA-binding region" description="HMG box 1" evidence="1">
    <location>
        <begin position="43"/>
        <end position="111"/>
    </location>
</feature>
<feature type="DNA-binding region" description="HMG box 2" evidence="1">
    <location>
        <begin position="116"/>
        <end position="183"/>
    </location>
</feature>
<feature type="helix" evidence="6">
    <location>
        <begin position="30"/>
        <end position="40"/>
    </location>
</feature>
<feature type="helix" evidence="6">
    <location>
        <begin position="49"/>
        <end position="64"/>
    </location>
</feature>
<feature type="helix" evidence="6">
    <location>
        <begin position="70"/>
        <end position="83"/>
    </location>
</feature>
<feature type="helix" evidence="6">
    <location>
        <begin position="86"/>
        <end position="113"/>
    </location>
</feature>
<feature type="helix" evidence="6">
    <location>
        <begin position="122"/>
        <end position="137"/>
    </location>
</feature>
<feature type="helix" evidence="6">
    <location>
        <begin position="143"/>
        <end position="156"/>
    </location>
</feature>
<feature type="helix" evidence="6">
    <location>
        <begin position="159"/>
        <end position="179"/>
    </location>
</feature>
<proteinExistence type="evidence at protein level"/>
<gene>
    <name type="primary">ABF2</name>
    <name type="synonym">HIM1</name>
    <name type="ordered locus">YMR072W</name>
    <name type="ORF">YM9916.11</name>
</gene>
<name>ABF2_YEAST</name>
<comment type="function">
    <text>Specific binding to the autonomously replicating sequence 1 (ARS1). Interaction with regulatory regions: probably involved in compacting the mitochondrial genome. It might play a positive role in gene expression and replication.</text>
</comment>
<comment type="subcellular location">
    <subcellularLocation>
        <location>Mitochondrion</location>
    </subcellularLocation>
    <subcellularLocation>
        <location evidence="5">Nucleus</location>
    </subcellularLocation>
</comment>
<comment type="disruption phenotype">
    <text evidence="4">Has a temperature-sensitive growth defect in glucose-rich medium, with slower growth and smaller colonies at 37 degrees Celsius but not 30 degrees Celsius; the phenotype is suppressed by overexpression of YHM2.</text>
</comment>
<comment type="miscellaneous">
    <text evidence="2">Present with 3810 molecules/cell in log phase SD medium.</text>
</comment>
<dbReference type="EMBL" id="M73753">
    <property type="protein sequence ID" value="AAA73079.2"/>
    <property type="status" value="ALT_SEQ"/>
    <property type="molecule type" value="Genomic_DNA"/>
</dbReference>
<dbReference type="EMBL" id="AJ223169">
    <property type="protein sequence ID" value="CAA11146.1"/>
    <property type="molecule type" value="mRNA"/>
</dbReference>
<dbReference type="EMBL" id="Z48952">
    <property type="protein sequence ID" value="CAA88797.1"/>
    <property type="molecule type" value="Genomic_DNA"/>
</dbReference>
<dbReference type="EMBL" id="AY557967">
    <property type="protein sequence ID" value="AAS56293.1"/>
    <property type="molecule type" value="Genomic_DNA"/>
</dbReference>
<dbReference type="EMBL" id="BK006946">
    <property type="protein sequence ID" value="DAA09970.1"/>
    <property type="molecule type" value="Genomic_DNA"/>
</dbReference>
<dbReference type="PIR" id="A41302">
    <property type="entry name" value="A41302"/>
</dbReference>
<dbReference type="RefSeq" id="NP_013788.1">
    <property type="nucleotide sequence ID" value="NM_001182570.1"/>
</dbReference>
<dbReference type="PDB" id="5JGH">
    <property type="method" value="X-ray"/>
    <property type="resolution" value="2.60 A"/>
    <property type="chains" value="A/D/G/J=27-183"/>
</dbReference>
<dbReference type="PDB" id="5JH0">
    <property type="method" value="X-ray"/>
    <property type="resolution" value="2.18 A"/>
    <property type="chains" value="A/D=27-183"/>
</dbReference>
<dbReference type="PDBsum" id="5JGH"/>
<dbReference type="PDBsum" id="5JH0"/>
<dbReference type="SMR" id="Q02486"/>
<dbReference type="BioGRID" id="35247">
    <property type="interactions" value="198"/>
</dbReference>
<dbReference type="DIP" id="DIP-5492N"/>
<dbReference type="FunCoup" id="Q02486">
    <property type="interactions" value="706"/>
</dbReference>
<dbReference type="IntAct" id="Q02486">
    <property type="interactions" value="59"/>
</dbReference>
<dbReference type="MINT" id="Q02486"/>
<dbReference type="STRING" id="4932.YMR072W"/>
<dbReference type="iPTMnet" id="Q02486"/>
<dbReference type="PaxDb" id="4932-YMR072W"/>
<dbReference type="PeptideAtlas" id="Q02486"/>
<dbReference type="EnsemblFungi" id="YMR072W_mRNA">
    <property type="protein sequence ID" value="YMR072W"/>
    <property type="gene ID" value="YMR072W"/>
</dbReference>
<dbReference type="GeneID" id="855094"/>
<dbReference type="KEGG" id="sce:YMR072W"/>
<dbReference type="AGR" id="SGD:S000004676"/>
<dbReference type="SGD" id="S000004676">
    <property type="gene designation" value="ABF2"/>
</dbReference>
<dbReference type="VEuPathDB" id="FungiDB:YMR072W"/>
<dbReference type="eggNOG" id="KOG0381">
    <property type="taxonomic scope" value="Eukaryota"/>
</dbReference>
<dbReference type="HOGENOM" id="CLU_082854_2_0_1"/>
<dbReference type="InParanoid" id="Q02486"/>
<dbReference type="OMA" id="PHSANEV"/>
<dbReference type="OrthoDB" id="5550281at2759"/>
<dbReference type="BioCyc" id="YEAST:G3O-32774-MONOMER"/>
<dbReference type="Reactome" id="R-SCE-140342">
    <property type="pathway name" value="Apoptosis induced DNA fragmentation"/>
</dbReference>
<dbReference type="Reactome" id="R-SCE-163282">
    <property type="pathway name" value="Mitochondrial transcription initiation"/>
</dbReference>
<dbReference type="Reactome" id="R-SCE-5620971">
    <property type="pathway name" value="Pyroptosis"/>
</dbReference>
<dbReference type="Reactome" id="R-SCE-5686938">
    <property type="pathway name" value="Regulation of TLR by endogenous ligand"/>
</dbReference>
<dbReference type="Reactome" id="R-SCE-6798695">
    <property type="pathway name" value="Neutrophil degranulation"/>
</dbReference>
<dbReference type="Reactome" id="R-SCE-9837999">
    <property type="pathway name" value="Mitochondrial protein degradation"/>
</dbReference>
<dbReference type="BioGRID-ORCS" id="855094">
    <property type="hits" value="0 hits in 10 CRISPR screens"/>
</dbReference>
<dbReference type="ChiTaRS" id="ABF2">
    <property type="organism name" value="yeast"/>
</dbReference>
<dbReference type="PRO" id="PR:Q02486"/>
<dbReference type="Proteomes" id="UP000002311">
    <property type="component" value="Chromosome XIII"/>
</dbReference>
<dbReference type="RNAct" id="Q02486">
    <property type="molecule type" value="protein"/>
</dbReference>
<dbReference type="GO" id="GO:0000262">
    <property type="term" value="C:mitochondrial chromosome"/>
    <property type="evidence" value="ECO:0000314"/>
    <property type="project" value="SGD"/>
</dbReference>
<dbReference type="GO" id="GO:0042645">
    <property type="term" value="C:mitochondrial nucleoid"/>
    <property type="evidence" value="ECO:0000314"/>
    <property type="project" value="SGD"/>
</dbReference>
<dbReference type="GO" id="GO:0005739">
    <property type="term" value="C:mitochondrion"/>
    <property type="evidence" value="ECO:0007005"/>
    <property type="project" value="SGD"/>
</dbReference>
<dbReference type="GO" id="GO:0005634">
    <property type="term" value="C:nucleus"/>
    <property type="evidence" value="ECO:0007669"/>
    <property type="project" value="UniProtKB-SubCell"/>
</dbReference>
<dbReference type="GO" id="GO:0003677">
    <property type="term" value="F:DNA binding"/>
    <property type="evidence" value="ECO:0000314"/>
    <property type="project" value="SGD"/>
</dbReference>
<dbReference type="GO" id="GO:0008301">
    <property type="term" value="F:DNA binding, bending"/>
    <property type="evidence" value="ECO:0000314"/>
    <property type="project" value="SGD"/>
</dbReference>
<dbReference type="GO" id="GO:0090139">
    <property type="term" value="P:mitochondrial chromosome packaging"/>
    <property type="evidence" value="ECO:0000315"/>
    <property type="project" value="SGD"/>
</dbReference>
<dbReference type="GO" id="GO:0000002">
    <property type="term" value="P:mitochondrial genome maintenance"/>
    <property type="evidence" value="ECO:0000315"/>
    <property type="project" value="SGD"/>
</dbReference>
<dbReference type="GO" id="GO:0000001">
    <property type="term" value="P:mitochondrion inheritance"/>
    <property type="evidence" value="ECO:0000315"/>
    <property type="project" value="SGD"/>
</dbReference>
<dbReference type="CDD" id="cd22010">
    <property type="entry name" value="HMG-box_ABF2-like_rpt1"/>
    <property type="match status" value="1"/>
</dbReference>
<dbReference type="CDD" id="cd22012">
    <property type="entry name" value="HMG-box_ABF2_IXR1-like_rpt2"/>
    <property type="match status" value="1"/>
</dbReference>
<dbReference type="Gene3D" id="1.10.30.10">
    <property type="entry name" value="High mobility group box domain"/>
    <property type="match status" value="2"/>
</dbReference>
<dbReference type="InterPro" id="IPR051965">
    <property type="entry name" value="ChromReg_NeuronalGeneExpr"/>
</dbReference>
<dbReference type="InterPro" id="IPR009071">
    <property type="entry name" value="HMG_box_dom"/>
</dbReference>
<dbReference type="InterPro" id="IPR036910">
    <property type="entry name" value="HMG_box_dom_sf"/>
</dbReference>
<dbReference type="PANTHER" id="PTHR46040">
    <property type="entry name" value="HIGH MOBILITY GROUP PROTEIN 2"/>
    <property type="match status" value="1"/>
</dbReference>
<dbReference type="PANTHER" id="PTHR46040:SF3">
    <property type="entry name" value="HIGH MOBILITY GROUP PROTEIN 2"/>
    <property type="match status" value="1"/>
</dbReference>
<dbReference type="Pfam" id="PF00505">
    <property type="entry name" value="HMG_box"/>
    <property type="match status" value="2"/>
</dbReference>
<dbReference type="SMART" id="SM00398">
    <property type="entry name" value="HMG"/>
    <property type="match status" value="2"/>
</dbReference>
<dbReference type="SUPFAM" id="SSF47095">
    <property type="entry name" value="HMG-box"/>
    <property type="match status" value="2"/>
</dbReference>
<dbReference type="PROSITE" id="PS50118">
    <property type="entry name" value="HMG_BOX_2"/>
    <property type="match status" value="2"/>
</dbReference>
<organism>
    <name type="scientific">Saccharomyces cerevisiae (strain ATCC 204508 / S288c)</name>
    <name type="common">Baker's yeast</name>
    <dbReference type="NCBI Taxonomy" id="559292"/>
    <lineage>
        <taxon>Eukaryota</taxon>
        <taxon>Fungi</taxon>
        <taxon>Dikarya</taxon>
        <taxon>Ascomycota</taxon>
        <taxon>Saccharomycotina</taxon>
        <taxon>Saccharomycetes</taxon>
        <taxon>Saccharomycetales</taxon>
        <taxon>Saccharomycetaceae</taxon>
        <taxon>Saccharomyces</taxon>
    </lineage>
</organism>
<protein>
    <recommendedName>
        <fullName>ARS-binding factor 2, mitochondrial</fullName>
    </recommendedName>
</protein>
<keyword id="KW-0002">3D-structure</keyword>
<keyword id="KW-0903">Direct protein sequencing</keyword>
<keyword id="KW-0238">DNA-binding</keyword>
<keyword id="KW-0496">Mitochondrion</keyword>
<keyword id="KW-0539">Nucleus</keyword>
<keyword id="KW-1185">Reference proteome</keyword>
<keyword id="KW-0677">Repeat</keyword>
<keyword id="KW-0809">Transit peptide</keyword>
<sequence length="183" mass="21562">MNSYSLLTRSFHESSKPLFNLASTLLKASKRTQLRNELIKQGPKRPTSAYFLYLQDHRSQFVKENPTLRPAEISKIAGEKWQNLEADIKEKYISERKKLYSEYQKAKKEFDEKLPPKKPAGPFIKYANEVRSQVFAQHPDKSQLDLMKIIGDKWQSLDQSIKDKYIQEYKKAIQEYNARYPLN</sequence>
<evidence type="ECO:0000255" key="1">
    <source>
        <dbReference type="PROSITE-ProRule" id="PRU00267"/>
    </source>
</evidence>
<evidence type="ECO:0000269" key="2">
    <source>
    </source>
</evidence>
<evidence type="ECO:0000269" key="3">
    <source>
    </source>
</evidence>
<evidence type="ECO:0000269" key="4">
    <source>
    </source>
</evidence>
<evidence type="ECO:0000305" key="5"/>
<evidence type="ECO:0007829" key="6">
    <source>
        <dbReference type="PDB" id="5JH0"/>
    </source>
</evidence>
<accession>Q02486</accession>
<accession>D6VZP6</accession>
<accession>Q712M5</accession>